<comment type="catalytic activity">
    <reaction evidence="1">
        <text>CMP + ATP = CDP + ADP</text>
        <dbReference type="Rhea" id="RHEA:11600"/>
        <dbReference type="ChEBI" id="CHEBI:30616"/>
        <dbReference type="ChEBI" id="CHEBI:58069"/>
        <dbReference type="ChEBI" id="CHEBI:60377"/>
        <dbReference type="ChEBI" id="CHEBI:456216"/>
        <dbReference type="EC" id="2.7.4.25"/>
    </reaction>
</comment>
<comment type="catalytic activity">
    <reaction evidence="1">
        <text>dCMP + ATP = dCDP + ADP</text>
        <dbReference type="Rhea" id="RHEA:25094"/>
        <dbReference type="ChEBI" id="CHEBI:30616"/>
        <dbReference type="ChEBI" id="CHEBI:57566"/>
        <dbReference type="ChEBI" id="CHEBI:58593"/>
        <dbReference type="ChEBI" id="CHEBI:456216"/>
        <dbReference type="EC" id="2.7.4.25"/>
    </reaction>
</comment>
<comment type="subcellular location">
    <subcellularLocation>
        <location evidence="1">Cytoplasm</location>
    </subcellularLocation>
</comment>
<comment type="similarity">
    <text evidence="1">Belongs to the cytidylate kinase family. Type 2 subfamily.</text>
</comment>
<proteinExistence type="inferred from homology"/>
<sequence length="192" mass="21737">MPKGCLVITVSGLAGSGTTTLCRKLAEHYGFKHVYAGLIFRQMAKERGMTLEEFQKYAELHPEIDREVDRRQIEAAKECNVVIEGRLAGWMVKNADLKIWLDAPIRVRAERVARREGITVEEAFMKIAEREMQNRKRYLNLYGIDINDLSIYDLIIDTSKWSPDGVFAIVKAAIDHLDPVGDAGSKKEKEVG</sequence>
<gene>
    <name evidence="1" type="primary">cmk</name>
    <name type="ordered locus">PF0820</name>
</gene>
<evidence type="ECO:0000255" key="1">
    <source>
        <dbReference type="HAMAP-Rule" id="MF_00239"/>
    </source>
</evidence>
<feature type="chain" id="PRO_0000132020" description="Cytidylate kinase">
    <location>
        <begin position="1"/>
        <end position="192"/>
    </location>
</feature>
<feature type="binding site" evidence="1">
    <location>
        <begin position="12"/>
        <end position="20"/>
    </location>
    <ligand>
        <name>ATP</name>
        <dbReference type="ChEBI" id="CHEBI:30616"/>
    </ligand>
</feature>
<reference key="1">
    <citation type="journal article" date="1999" name="Genetics">
        <title>Divergence of the hyperthermophilic archaea Pyrococcus furiosus and P. horikoshii inferred from complete genomic sequences.</title>
        <authorList>
            <person name="Maeder D.L."/>
            <person name="Weiss R.B."/>
            <person name="Dunn D.M."/>
            <person name="Cherry J.L."/>
            <person name="Gonzalez J.M."/>
            <person name="DiRuggiero J."/>
            <person name="Robb F.T."/>
        </authorList>
    </citation>
    <scope>NUCLEOTIDE SEQUENCE [LARGE SCALE GENOMIC DNA]</scope>
    <source>
        <strain>ATCC 43587 / DSM 3638 / JCM 8422 / Vc1</strain>
    </source>
</reference>
<protein>
    <recommendedName>
        <fullName evidence="1">Cytidylate kinase</fullName>
        <shortName evidence="1">CK</shortName>
        <ecNumber evidence="1">2.7.4.25</ecNumber>
    </recommendedName>
    <alternativeName>
        <fullName evidence="1">Cytidine monophosphate kinase</fullName>
        <shortName evidence="1">CMP kinase</shortName>
    </alternativeName>
</protein>
<accession>Q8U2L4</accession>
<keyword id="KW-0067">ATP-binding</keyword>
<keyword id="KW-0963">Cytoplasm</keyword>
<keyword id="KW-0418">Kinase</keyword>
<keyword id="KW-0547">Nucleotide-binding</keyword>
<keyword id="KW-1185">Reference proteome</keyword>
<keyword id="KW-0808">Transferase</keyword>
<organism>
    <name type="scientific">Pyrococcus furiosus (strain ATCC 43587 / DSM 3638 / JCM 8422 / Vc1)</name>
    <dbReference type="NCBI Taxonomy" id="186497"/>
    <lineage>
        <taxon>Archaea</taxon>
        <taxon>Methanobacteriati</taxon>
        <taxon>Methanobacteriota</taxon>
        <taxon>Thermococci</taxon>
        <taxon>Thermococcales</taxon>
        <taxon>Thermococcaceae</taxon>
        <taxon>Pyrococcus</taxon>
    </lineage>
</organism>
<name>KCY_PYRFU</name>
<dbReference type="EC" id="2.7.4.25" evidence="1"/>
<dbReference type="EMBL" id="AE009950">
    <property type="protein sequence ID" value="AAL80944.1"/>
    <property type="molecule type" value="Genomic_DNA"/>
</dbReference>
<dbReference type="RefSeq" id="WP_011011949.1">
    <property type="nucleotide sequence ID" value="NZ_CP023154.1"/>
</dbReference>
<dbReference type="SMR" id="Q8U2L4"/>
<dbReference type="STRING" id="186497.PF0820"/>
<dbReference type="PaxDb" id="186497-PF0820"/>
<dbReference type="GeneID" id="41712623"/>
<dbReference type="KEGG" id="pfu:PF0820"/>
<dbReference type="PATRIC" id="fig|186497.12.peg.868"/>
<dbReference type="eggNOG" id="arCOG01037">
    <property type="taxonomic scope" value="Archaea"/>
</dbReference>
<dbReference type="HOGENOM" id="CLU_079959_1_0_2"/>
<dbReference type="OrthoDB" id="31096at2157"/>
<dbReference type="PhylomeDB" id="Q8U2L4"/>
<dbReference type="Proteomes" id="UP000001013">
    <property type="component" value="Chromosome"/>
</dbReference>
<dbReference type="GO" id="GO:0005737">
    <property type="term" value="C:cytoplasm"/>
    <property type="evidence" value="ECO:0007669"/>
    <property type="project" value="UniProtKB-SubCell"/>
</dbReference>
<dbReference type="GO" id="GO:0005524">
    <property type="term" value="F:ATP binding"/>
    <property type="evidence" value="ECO:0007669"/>
    <property type="project" value="UniProtKB-UniRule"/>
</dbReference>
<dbReference type="GO" id="GO:0036430">
    <property type="term" value="F:CMP kinase activity"/>
    <property type="evidence" value="ECO:0007669"/>
    <property type="project" value="RHEA"/>
</dbReference>
<dbReference type="GO" id="GO:0036431">
    <property type="term" value="F:dCMP kinase activity"/>
    <property type="evidence" value="ECO:0007669"/>
    <property type="project" value="RHEA"/>
</dbReference>
<dbReference type="GO" id="GO:0006220">
    <property type="term" value="P:pyrimidine nucleotide metabolic process"/>
    <property type="evidence" value="ECO:0007669"/>
    <property type="project" value="UniProtKB-UniRule"/>
</dbReference>
<dbReference type="CDD" id="cd02020">
    <property type="entry name" value="CMPK"/>
    <property type="match status" value="1"/>
</dbReference>
<dbReference type="Gene3D" id="3.40.50.300">
    <property type="entry name" value="P-loop containing nucleotide triphosphate hydrolases"/>
    <property type="match status" value="1"/>
</dbReference>
<dbReference type="HAMAP" id="MF_00239">
    <property type="entry name" value="Cytidyl_kinase_type2"/>
    <property type="match status" value="1"/>
</dbReference>
<dbReference type="InterPro" id="IPR011892">
    <property type="entry name" value="Cyt_kin_arch"/>
</dbReference>
<dbReference type="InterPro" id="IPR011994">
    <property type="entry name" value="Cytidylate_kinase_dom"/>
</dbReference>
<dbReference type="InterPro" id="IPR027417">
    <property type="entry name" value="P-loop_NTPase"/>
</dbReference>
<dbReference type="NCBIfam" id="TIGR02173">
    <property type="entry name" value="cyt_kin_arch"/>
    <property type="match status" value="1"/>
</dbReference>
<dbReference type="Pfam" id="PF13189">
    <property type="entry name" value="Cytidylate_kin2"/>
    <property type="match status" value="1"/>
</dbReference>
<dbReference type="SUPFAM" id="SSF52540">
    <property type="entry name" value="P-loop containing nucleoside triphosphate hydrolases"/>
    <property type="match status" value="1"/>
</dbReference>